<keyword id="KW-0067">ATP-binding</keyword>
<keyword id="KW-1003">Cell membrane</keyword>
<keyword id="KW-0472">Membrane</keyword>
<keyword id="KW-0547">Nucleotide-binding</keyword>
<keyword id="KW-1278">Translocase</keyword>
<keyword id="KW-0813">Transport</keyword>
<comment type="function">
    <text evidence="1">ATP-binding (A) component of a common energy-coupling factor (ECF) ABC-transporter complex. Unlike classic ABC transporters this ECF transporter provides the energy necessary to transport a number of different substrates.</text>
</comment>
<comment type="subunit">
    <text evidence="1">Forms a stable energy-coupling factor (ECF) transporter complex composed of 2 membrane-embedded substrate-binding proteins (S component), 2 ATP-binding proteins (A component) and 2 transmembrane proteins (T component).</text>
</comment>
<comment type="subcellular location">
    <subcellularLocation>
        <location evidence="1">Cell membrane</location>
        <topology evidence="1">Peripheral membrane protein</topology>
    </subcellularLocation>
</comment>
<comment type="similarity">
    <text evidence="1">Belongs to the ABC transporter superfamily. Energy-coupling factor EcfA family.</text>
</comment>
<sequence length="285" mass="31733">MIFMKDNIVTVEHLSFTYKDSEEPAVKDVSFSIPKGTWTTLVGHNGSGKSTIARLLNGILLPDDNPETLINIDGITLTEKTMWDIRDRVGIVFQNPDNQFVGATVEDDVAFGLENRQVPRPKMKSIVQDVLNQVGMTNFQKSEPQYLSGGQKQRVAIAGILAIGPKLIILDESTSMLDPAGKFKILKLIRKLQKENELTIFSITHDINEAEHADQILVLDKGSLLASDSPVDIFKDVSLIKNAGLDLPLFYKIKNKLINKGISIPQEVNTEEKLVKYLCQLNSKM</sequence>
<proteinExistence type="inferred from homology"/>
<evidence type="ECO:0000255" key="1">
    <source>
        <dbReference type="HAMAP-Rule" id="MF_01710"/>
    </source>
</evidence>
<feature type="chain" id="PRO_0000287951" description="Energy-coupling factor transporter ATP-binding protein EcfA1">
    <location>
        <begin position="1"/>
        <end position="285"/>
    </location>
</feature>
<feature type="domain" description="ABC transporter" evidence="1">
    <location>
        <begin position="9"/>
        <end position="246"/>
    </location>
</feature>
<feature type="binding site" evidence="1">
    <location>
        <begin position="43"/>
        <end position="50"/>
    </location>
    <ligand>
        <name>ATP</name>
        <dbReference type="ChEBI" id="CHEBI:30616"/>
    </ligand>
</feature>
<accession>Q045Z8</accession>
<protein>
    <recommendedName>
        <fullName evidence="1">Energy-coupling factor transporter ATP-binding protein EcfA1</fullName>
        <shortName evidence="1">ECF transporter A component EcfA1</shortName>
        <ecNumber evidence="1">7.-.-.-</ecNumber>
    </recommendedName>
</protein>
<gene>
    <name evidence="1" type="primary">ecfA1</name>
    <name type="synonym">cbiO1</name>
    <name type="ordered locus">LGAS_0318</name>
</gene>
<reference key="1">
    <citation type="journal article" date="2006" name="Proc. Natl. Acad. Sci. U.S.A.">
        <title>Comparative genomics of the lactic acid bacteria.</title>
        <authorList>
            <person name="Makarova K.S."/>
            <person name="Slesarev A."/>
            <person name="Wolf Y.I."/>
            <person name="Sorokin A."/>
            <person name="Mirkin B."/>
            <person name="Koonin E.V."/>
            <person name="Pavlov A."/>
            <person name="Pavlova N."/>
            <person name="Karamychev V."/>
            <person name="Polouchine N."/>
            <person name="Shakhova V."/>
            <person name="Grigoriev I."/>
            <person name="Lou Y."/>
            <person name="Rohksar D."/>
            <person name="Lucas S."/>
            <person name="Huang K."/>
            <person name="Goodstein D.M."/>
            <person name="Hawkins T."/>
            <person name="Plengvidhya V."/>
            <person name="Welker D."/>
            <person name="Hughes J."/>
            <person name="Goh Y."/>
            <person name="Benson A."/>
            <person name="Baldwin K."/>
            <person name="Lee J.-H."/>
            <person name="Diaz-Muniz I."/>
            <person name="Dosti B."/>
            <person name="Smeianov V."/>
            <person name="Wechter W."/>
            <person name="Barabote R."/>
            <person name="Lorca G."/>
            <person name="Altermann E."/>
            <person name="Barrangou R."/>
            <person name="Ganesan B."/>
            <person name="Xie Y."/>
            <person name="Rawsthorne H."/>
            <person name="Tamir D."/>
            <person name="Parker C."/>
            <person name="Breidt F."/>
            <person name="Broadbent J.R."/>
            <person name="Hutkins R."/>
            <person name="O'Sullivan D."/>
            <person name="Steele J."/>
            <person name="Unlu G."/>
            <person name="Saier M.H. Jr."/>
            <person name="Klaenhammer T."/>
            <person name="Richardson P."/>
            <person name="Kozyavkin S."/>
            <person name="Weimer B.C."/>
            <person name="Mills D.A."/>
        </authorList>
    </citation>
    <scope>NUCLEOTIDE SEQUENCE [LARGE SCALE GENOMIC DNA]</scope>
    <source>
        <strain>ATCC 33323 / DSM 20243 / BCRC 14619 / CIP 102991 / JCM 1131 / KCTC 3163 / NCIMB 11718 / NCTC 13722 / AM63</strain>
    </source>
</reference>
<organism>
    <name type="scientific">Lactobacillus gasseri (strain ATCC 33323 / DSM 20243 / BCRC 14619 / CIP 102991 / JCM 1131 / KCTC 3163 / NCIMB 11718 / NCTC 13722 / AM63)</name>
    <dbReference type="NCBI Taxonomy" id="324831"/>
    <lineage>
        <taxon>Bacteria</taxon>
        <taxon>Bacillati</taxon>
        <taxon>Bacillota</taxon>
        <taxon>Bacilli</taxon>
        <taxon>Lactobacillales</taxon>
        <taxon>Lactobacillaceae</taxon>
        <taxon>Lactobacillus</taxon>
    </lineage>
</organism>
<name>ECFA1_LACGA</name>
<dbReference type="EC" id="7.-.-.-" evidence="1"/>
<dbReference type="EMBL" id="CP000413">
    <property type="protein sequence ID" value="ABJ59724.1"/>
    <property type="molecule type" value="Genomic_DNA"/>
</dbReference>
<dbReference type="SMR" id="Q045Z8"/>
<dbReference type="KEGG" id="lga:LGAS_0318"/>
<dbReference type="HOGENOM" id="CLU_000604_1_22_9"/>
<dbReference type="Proteomes" id="UP000000664">
    <property type="component" value="Chromosome"/>
</dbReference>
<dbReference type="GO" id="GO:0043190">
    <property type="term" value="C:ATP-binding cassette (ABC) transporter complex"/>
    <property type="evidence" value="ECO:0007669"/>
    <property type="project" value="TreeGrafter"/>
</dbReference>
<dbReference type="GO" id="GO:0005524">
    <property type="term" value="F:ATP binding"/>
    <property type="evidence" value="ECO:0007669"/>
    <property type="project" value="UniProtKB-KW"/>
</dbReference>
<dbReference type="GO" id="GO:0016887">
    <property type="term" value="F:ATP hydrolysis activity"/>
    <property type="evidence" value="ECO:0007669"/>
    <property type="project" value="InterPro"/>
</dbReference>
<dbReference type="GO" id="GO:0042626">
    <property type="term" value="F:ATPase-coupled transmembrane transporter activity"/>
    <property type="evidence" value="ECO:0007669"/>
    <property type="project" value="TreeGrafter"/>
</dbReference>
<dbReference type="CDD" id="cd03225">
    <property type="entry name" value="ABC_cobalt_CbiO_domain1"/>
    <property type="match status" value="1"/>
</dbReference>
<dbReference type="FunFam" id="3.40.50.300:FF:000224">
    <property type="entry name" value="Energy-coupling factor transporter ATP-binding protein EcfA"/>
    <property type="match status" value="1"/>
</dbReference>
<dbReference type="Gene3D" id="3.40.50.300">
    <property type="entry name" value="P-loop containing nucleotide triphosphate hydrolases"/>
    <property type="match status" value="1"/>
</dbReference>
<dbReference type="InterPro" id="IPR003593">
    <property type="entry name" value="AAA+_ATPase"/>
</dbReference>
<dbReference type="InterPro" id="IPR003439">
    <property type="entry name" value="ABC_transporter-like_ATP-bd"/>
</dbReference>
<dbReference type="InterPro" id="IPR017871">
    <property type="entry name" value="ABC_transporter-like_CS"/>
</dbReference>
<dbReference type="InterPro" id="IPR015856">
    <property type="entry name" value="ABC_transpr_CbiO/EcfA_su"/>
</dbReference>
<dbReference type="InterPro" id="IPR050095">
    <property type="entry name" value="ECF_ABC_transporter_ATP-bd"/>
</dbReference>
<dbReference type="InterPro" id="IPR030947">
    <property type="entry name" value="EcfA_1"/>
</dbReference>
<dbReference type="InterPro" id="IPR027417">
    <property type="entry name" value="P-loop_NTPase"/>
</dbReference>
<dbReference type="NCBIfam" id="TIGR04520">
    <property type="entry name" value="ECF_ATPase_1"/>
    <property type="match status" value="1"/>
</dbReference>
<dbReference type="NCBIfam" id="NF010167">
    <property type="entry name" value="PRK13648.1"/>
    <property type="match status" value="1"/>
</dbReference>
<dbReference type="PANTHER" id="PTHR43553:SF24">
    <property type="entry name" value="ENERGY-COUPLING FACTOR TRANSPORTER ATP-BINDING PROTEIN ECFA1"/>
    <property type="match status" value="1"/>
</dbReference>
<dbReference type="PANTHER" id="PTHR43553">
    <property type="entry name" value="HEAVY METAL TRANSPORTER"/>
    <property type="match status" value="1"/>
</dbReference>
<dbReference type="Pfam" id="PF00005">
    <property type="entry name" value="ABC_tran"/>
    <property type="match status" value="1"/>
</dbReference>
<dbReference type="SMART" id="SM00382">
    <property type="entry name" value="AAA"/>
    <property type="match status" value="1"/>
</dbReference>
<dbReference type="SUPFAM" id="SSF52540">
    <property type="entry name" value="P-loop containing nucleoside triphosphate hydrolases"/>
    <property type="match status" value="1"/>
</dbReference>
<dbReference type="PROSITE" id="PS00211">
    <property type="entry name" value="ABC_TRANSPORTER_1"/>
    <property type="match status" value="1"/>
</dbReference>
<dbReference type="PROSITE" id="PS50893">
    <property type="entry name" value="ABC_TRANSPORTER_2"/>
    <property type="match status" value="1"/>
</dbReference>
<dbReference type="PROSITE" id="PS51246">
    <property type="entry name" value="CBIO"/>
    <property type="match status" value="1"/>
</dbReference>